<proteinExistence type="inferred from homology"/>
<reference key="1">
    <citation type="journal article" date="2009" name="PLoS Genet.">
        <title>Organised genome dynamics in the Escherichia coli species results in highly diverse adaptive paths.</title>
        <authorList>
            <person name="Touchon M."/>
            <person name="Hoede C."/>
            <person name="Tenaillon O."/>
            <person name="Barbe V."/>
            <person name="Baeriswyl S."/>
            <person name="Bidet P."/>
            <person name="Bingen E."/>
            <person name="Bonacorsi S."/>
            <person name="Bouchier C."/>
            <person name="Bouvet O."/>
            <person name="Calteau A."/>
            <person name="Chiapello H."/>
            <person name="Clermont O."/>
            <person name="Cruveiller S."/>
            <person name="Danchin A."/>
            <person name="Diard M."/>
            <person name="Dossat C."/>
            <person name="Karoui M.E."/>
            <person name="Frapy E."/>
            <person name="Garry L."/>
            <person name="Ghigo J.M."/>
            <person name="Gilles A.M."/>
            <person name="Johnson J."/>
            <person name="Le Bouguenec C."/>
            <person name="Lescat M."/>
            <person name="Mangenot S."/>
            <person name="Martinez-Jehanne V."/>
            <person name="Matic I."/>
            <person name="Nassif X."/>
            <person name="Oztas S."/>
            <person name="Petit M.A."/>
            <person name="Pichon C."/>
            <person name="Rouy Z."/>
            <person name="Ruf C.S."/>
            <person name="Schneider D."/>
            <person name="Tourret J."/>
            <person name="Vacherie B."/>
            <person name="Vallenet D."/>
            <person name="Medigue C."/>
            <person name="Rocha E.P.C."/>
            <person name="Denamur E."/>
        </authorList>
    </citation>
    <scope>NUCLEOTIDE SEQUENCE [LARGE SCALE GENOMIC DNA]</scope>
    <source>
        <strain>ATCC 35469 / DSM 13698 / BCRC 15582 / CCUG 18766 / IAM 14443 / JCM 21226 / LMG 7866 / NBRC 102419 / NCTC 12128 / CDC 0568-73</strain>
    </source>
</reference>
<keyword id="KW-0378">Hydrolase</keyword>
<keyword id="KW-0479">Metal-binding</keyword>
<keyword id="KW-0554">One-carbon metabolism</keyword>
<keyword id="KW-0862">Zinc</keyword>
<organism>
    <name type="scientific">Escherichia fergusonii (strain ATCC 35469 / DSM 13698 / CCUG 18766 / IAM 14443 / JCM 21226 / LMG 7866 / NBRC 102419 / NCTC 12128 / CDC 0568-73)</name>
    <dbReference type="NCBI Taxonomy" id="585054"/>
    <lineage>
        <taxon>Bacteria</taxon>
        <taxon>Pseudomonadati</taxon>
        <taxon>Pseudomonadota</taxon>
        <taxon>Gammaproteobacteria</taxon>
        <taxon>Enterobacterales</taxon>
        <taxon>Enterobacteriaceae</taxon>
        <taxon>Escherichia</taxon>
    </lineage>
</organism>
<name>GCH1_ESCF3</name>
<accession>B7LVB3</accession>
<dbReference type="EC" id="3.5.4.16" evidence="1"/>
<dbReference type="EMBL" id="CU928158">
    <property type="protein sequence ID" value="CAQ89740.1"/>
    <property type="molecule type" value="Genomic_DNA"/>
</dbReference>
<dbReference type="RefSeq" id="WP_001139613.1">
    <property type="nucleotide sequence ID" value="NC_011740.1"/>
</dbReference>
<dbReference type="SMR" id="B7LVB3"/>
<dbReference type="GeneID" id="93775029"/>
<dbReference type="KEGG" id="efe:EFER_2238"/>
<dbReference type="HOGENOM" id="CLU_049768_3_2_6"/>
<dbReference type="OrthoDB" id="9801207at2"/>
<dbReference type="UniPathway" id="UPA00848">
    <property type="reaction ID" value="UER00151"/>
</dbReference>
<dbReference type="Proteomes" id="UP000000745">
    <property type="component" value="Chromosome"/>
</dbReference>
<dbReference type="GO" id="GO:0005737">
    <property type="term" value="C:cytoplasm"/>
    <property type="evidence" value="ECO:0007669"/>
    <property type="project" value="TreeGrafter"/>
</dbReference>
<dbReference type="GO" id="GO:0005525">
    <property type="term" value="F:GTP binding"/>
    <property type="evidence" value="ECO:0007669"/>
    <property type="project" value="TreeGrafter"/>
</dbReference>
<dbReference type="GO" id="GO:0003934">
    <property type="term" value="F:GTP cyclohydrolase I activity"/>
    <property type="evidence" value="ECO:0007669"/>
    <property type="project" value="UniProtKB-UniRule"/>
</dbReference>
<dbReference type="GO" id="GO:0008270">
    <property type="term" value="F:zinc ion binding"/>
    <property type="evidence" value="ECO:0007669"/>
    <property type="project" value="UniProtKB-UniRule"/>
</dbReference>
<dbReference type="GO" id="GO:0006730">
    <property type="term" value="P:one-carbon metabolic process"/>
    <property type="evidence" value="ECO:0007669"/>
    <property type="project" value="UniProtKB-UniRule"/>
</dbReference>
<dbReference type="GO" id="GO:0006729">
    <property type="term" value="P:tetrahydrobiopterin biosynthetic process"/>
    <property type="evidence" value="ECO:0007669"/>
    <property type="project" value="TreeGrafter"/>
</dbReference>
<dbReference type="GO" id="GO:0046654">
    <property type="term" value="P:tetrahydrofolate biosynthetic process"/>
    <property type="evidence" value="ECO:0007669"/>
    <property type="project" value="UniProtKB-UniRule"/>
</dbReference>
<dbReference type="CDD" id="cd00642">
    <property type="entry name" value="GTP_cyclohydro1"/>
    <property type="match status" value="1"/>
</dbReference>
<dbReference type="FunFam" id="1.10.286.10:FF:000002">
    <property type="entry name" value="GTP cyclohydrolase 1"/>
    <property type="match status" value="1"/>
</dbReference>
<dbReference type="FunFam" id="3.30.1130.10:FF:000001">
    <property type="entry name" value="GTP cyclohydrolase 1"/>
    <property type="match status" value="1"/>
</dbReference>
<dbReference type="Gene3D" id="1.10.286.10">
    <property type="match status" value="1"/>
</dbReference>
<dbReference type="Gene3D" id="3.30.1130.10">
    <property type="match status" value="1"/>
</dbReference>
<dbReference type="HAMAP" id="MF_00223">
    <property type="entry name" value="FolE"/>
    <property type="match status" value="1"/>
</dbReference>
<dbReference type="InterPro" id="IPR043133">
    <property type="entry name" value="GTP-CH-I_C/QueF"/>
</dbReference>
<dbReference type="InterPro" id="IPR043134">
    <property type="entry name" value="GTP-CH-I_N"/>
</dbReference>
<dbReference type="InterPro" id="IPR001474">
    <property type="entry name" value="GTP_CycHdrlase_I"/>
</dbReference>
<dbReference type="InterPro" id="IPR018234">
    <property type="entry name" value="GTP_CycHdrlase_I_CS"/>
</dbReference>
<dbReference type="InterPro" id="IPR020602">
    <property type="entry name" value="GTP_CycHdrlase_I_dom"/>
</dbReference>
<dbReference type="NCBIfam" id="TIGR00063">
    <property type="entry name" value="folE"/>
    <property type="match status" value="1"/>
</dbReference>
<dbReference type="NCBIfam" id="NF006824">
    <property type="entry name" value="PRK09347.1-1"/>
    <property type="match status" value="1"/>
</dbReference>
<dbReference type="NCBIfam" id="NF006826">
    <property type="entry name" value="PRK09347.1-3"/>
    <property type="match status" value="1"/>
</dbReference>
<dbReference type="PANTHER" id="PTHR11109:SF7">
    <property type="entry name" value="GTP CYCLOHYDROLASE 1"/>
    <property type="match status" value="1"/>
</dbReference>
<dbReference type="PANTHER" id="PTHR11109">
    <property type="entry name" value="GTP CYCLOHYDROLASE I"/>
    <property type="match status" value="1"/>
</dbReference>
<dbReference type="Pfam" id="PF01227">
    <property type="entry name" value="GTP_cyclohydroI"/>
    <property type="match status" value="1"/>
</dbReference>
<dbReference type="SUPFAM" id="SSF55620">
    <property type="entry name" value="Tetrahydrobiopterin biosynthesis enzymes-like"/>
    <property type="match status" value="1"/>
</dbReference>
<dbReference type="PROSITE" id="PS00859">
    <property type="entry name" value="GTP_CYCLOHYDROL_1_1"/>
    <property type="match status" value="1"/>
</dbReference>
<dbReference type="PROSITE" id="PS00860">
    <property type="entry name" value="GTP_CYCLOHYDROL_1_2"/>
    <property type="match status" value="1"/>
</dbReference>
<sequence>MPSLSKEAALVHEALVARGLETPLRPPVHEMDNETRKSLIAGHMTEIMQLLNLDLADDSLMETPHRIAKMYVDEIFSGLDYANFPKITLIENKMKVDEMVTVRDITLTSTCEHHFVTIDGKATVAYIPKDSVIGLSKINRIVQFFAQRPQVQERLTQQILIALQTLLGTNNVAVSIDAVHYCVKARGIRDATSATTTTSLGGLFKSSQNTRHEFLRAVRHHN</sequence>
<evidence type="ECO:0000255" key="1">
    <source>
        <dbReference type="HAMAP-Rule" id="MF_00223"/>
    </source>
</evidence>
<protein>
    <recommendedName>
        <fullName evidence="1">GTP cyclohydrolase 1</fullName>
        <ecNumber evidence="1">3.5.4.16</ecNumber>
    </recommendedName>
    <alternativeName>
        <fullName evidence="1">GTP cyclohydrolase I</fullName>
        <shortName evidence="1">GTP-CH-I</shortName>
    </alternativeName>
</protein>
<gene>
    <name evidence="1" type="primary">folE</name>
    <name type="ordered locus">EFER_2238</name>
</gene>
<feature type="chain" id="PRO_1000190077" description="GTP cyclohydrolase 1">
    <location>
        <begin position="1"/>
        <end position="222"/>
    </location>
</feature>
<feature type="binding site" evidence="1">
    <location>
        <position position="111"/>
    </location>
    <ligand>
        <name>Zn(2+)</name>
        <dbReference type="ChEBI" id="CHEBI:29105"/>
    </ligand>
</feature>
<feature type="binding site" evidence="1">
    <location>
        <position position="114"/>
    </location>
    <ligand>
        <name>Zn(2+)</name>
        <dbReference type="ChEBI" id="CHEBI:29105"/>
    </ligand>
</feature>
<feature type="binding site" evidence="1">
    <location>
        <position position="182"/>
    </location>
    <ligand>
        <name>Zn(2+)</name>
        <dbReference type="ChEBI" id="CHEBI:29105"/>
    </ligand>
</feature>
<comment type="catalytic activity">
    <reaction evidence="1">
        <text>GTP + H2O = 7,8-dihydroneopterin 3'-triphosphate + formate + H(+)</text>
        <dbReference type="Rhea" id="RHEA:17473"/>
        <dbReference type="ChEBI" id="CHEBI:15377"/>
        <dbReference type="ChEBI" id="CHEBI:15378"/>
        <dbReference type="ChEBI" id="CHEBI:15740"/>
        <dbReference type="ChEBI" id="CHEBI:37565"/>
        <dbReference type="ChEBI" id="CHEBI:58462"/>
        <dbReference type="EC" id="3.5.4.16"/>
    </reaction>
</comment>
<comment type="pathway">
    <text evidence="1">Cofactor biosynthesis; 7,8-dihydroneopterin triphosphate biosynthesis; 7,8-dihydroneopterin triphosphate from GTP: step 1/1.</text>
</comment>
<comment type="subunit">
    <text evidence="1">Homomer.</text>
</comment>
<comment type="similarity">
    <text evidence="1">Belongs to the GTP cyclohydrolase I family.</text>
</comment>